<reference key="1">
    <citation type="journal article" date="2004" name="J. Infect. Dis.">
        <title>Progress toward characterization of the group A Streptococcus metagenome: complete genome sequence of a macrolide-resistant serotype M6 strain.</title>
        <authorList>
            <person name="Banks D.J."/>
            <person name="Porcella S.F."/>
            <person name="Barbian K.D."/>
            <person name="Beres S.B."/>
            <person name="Philips L.E."/>
            <person name="Voyich J.M."/>
            <person name="DeLeo F.R."/>
            <person name="Martin J.M."/>
            <person name="Somerville G.A."/>
            <person name="Musser J.M."/>
        </authorList>
    </citation>
    <scope>NUCLEOTIDE SEQUENCE [LARGE SCALE GENOMIC DNA]</scope>
    <source>
        <strain>ATCC BAA-946 / MGAS10394</strain>
    </source>
</reference>
<sequence length="325" mass="35737">MKNPKMTVIGGGTGISIILKSLRNEAVDITAVVTVADDGGSSGELRNAMQLAPPGDLRNVLLAMSDMPKFYERVFQYRFNESDGALAGHPLGNLIIAGISEMQGSTYNAIQILTKFFHITGKIYPSSEQALTLHAVFKDGHEVAGESSIAKYQGMIDHVYVTNTYNDQKPQASRKVVEAILESDMIVLGPGSLFTSILPNLVIPEIKEALRQTKAEVVYICNIMTQYGETEQFSDADHVAVLNQHLGRDLIDTVLVNVAKVPQAYMNSNKFDEYLVQVDHDFAGLCRAAKRVISSYFLRLENGGAFHDGNLVVEELMNLVRIVKQ</sequence>
<feature type="chain" id="PRO_0000107816" description="Putative gluconeogenesis factor">
    <location>
        <begin position="1"/>
        <end position="325"/>
    </location>
</feature>
<proteinExistence type="inferred from homology"/>
<name>GNGF_STRP6</name>
<protein>
    <recommendedName>
        <fullName evidence="1">Putative gluconeogenesis factor</fullName>
    </recommendedName>
</protein>
<evidence type="ECO:0000255" key="1">
    <source>
        <dbReference type="HAMAP-Rule" id="MF_00973"/>
    </source>
</evidence>
<accession>Q5XD18</accession>
<keyword id="KW-0963">Cytoplasm</keyword>
<organism>
    <name type="scientific">Streptococcus pyogenes serotype M6 (strain ATCC BAA-946 / MGAS10394)</name>
    <dbReference type="NCBI Taxonomy" id="286636"/>
    <lineage>
        <taxon>Bacteria</taxon>
        <taxon>Bacillati</taxon>
        <taxon>Bacillota</taxon>
        <taxon>Bacilli</taxon>
        <taxon>Lactobacillales</taxon>
        <taxon>Streptococcaceae</taxon>
        <taxon>Streptococcus</taxon>
    </lineage>
</organism>
<comment type="function">
    <text evidence="1">Required for morphogenesis under gluconeogenic growth conditions.</text>
</comment>
<comment type="subcellular location">
    <subcellularLocation>
        <location evidence="1">Cytoplasm</location>
    </subcellularLocation>
</comment>
<comment type="similarity">
    <text evidence="1">Belongs to the gluconeogenesis factor family.</text>
</comment>
<gene>
    <name type="ordered locus">M6_Spy0560</name>
</gene>
<dbReference type="EMBL" id="CP000003">
    <property type="protein sequence ID" value="AAT86695.1"/>
    <property type="molecule type" value="Genomic_DNA"/>
</dbReference>
<dbReference type="RefSeq" id="WP_011017561.1">
    <property type="nucleotide sequence ID" value="NC_006086.1"/>
</dbReference>
<dbReference type="SMR" id="Q5XD18"/>
<dbReference type="KEGG" id="spa:M6_Spy0560"/>
<dbReference type="HOGENOM" id="CLU_044041_0_1_9"/>
<dbReference type="Proteomes" id="UP000001167">
    <property type="component" value="Chromosome"/>
</dbReference>
<dbReference type="GO" id="GO:0005737">
    <property type="term" value="C:cytoplasm"/>
    <property type="evidence" value="ECO:0007669"/>
    <property type="project" value="UniProtKB-SubCell"/>
</dbReference>
<dbReference type="GO" id="GO:0043743">
    <property type="term" value="F:LPPG:FO 2-phospho-L-lactate transferase activity"/>
    <property type="evidence" value="ECO:0007669"/>
    <property type="project" value="InterPro"/>
</dbReference>
<dbReference type="GO" id="GO:0008360">
    <property type="term" value="P:regulation of cell shape"/>
    <property type="evidence" value="ECO:0007669"/>
    <property type="project" value="UniProtKB-UniRule"/>
</dbReference>
<dbReference type="CDD" id="cd07044">
    <property type="entry name" value="CofD_YvcK"/>
    <property type="match status" value="1"/>
</dbReference>
<dbReference type="Gene3D" id="3.40.50.10680">
    <property type="entry name" value="CofD-like domains"/>
    <property type="match status" value="1"/>
</dbReference>
<dbReference type="HAMAP" id="MF_00973">
    <property type="entry name" value="Gluconeogen_factor"/>
    <property type="match status" value="1"/>
</dbReference>
<dbReference type="InterPro" id="IPR002882">
    <property type="entry name" value="CofD"/>
</dbReference>
<dbReference type="InterPro" id="IPR038136">
    <property type="entry name" value="CofD-like_dom_sf"/>
</dbReference>
<dbReference type="InterPro" id="IPR010119">
    <property type="entry name" value="Gluconeogen_factor"/>
</dbReference>
<dbReference type="NCBIfam" id="TIGR01826">
    <property type="entry name" value="CofD_related"/>
    <property type="match status" value="1"/>
</dbReference>
<dbReference type="PANTHER" id="PTHR30135:SF3">
    <property type="entry name" value="GLUCONEOGENESIS FACTOR-RELATED"/>
    <property type="match status" value="1"/>
</dbReference>
<dbReference type="PANTHER" id="PTHR30135">
    <property type="entry name" value="UNCHARACTERIZED PROTEIN YVCK-RELATED"/>
    <property type="match status" value="1"/>
</dbReference>
<dbReference type="Pfam" id="PF01933">
    <property type="entry name" value="CofD"/>
    <property type="match status" value="1"/>
</dbReference>
<dbReference type="SUPFAM" id="SSF142338">
    <property type="entry name" value="CofD-like"/>
    <property type="match status" value="1"/>
</dbReference>